<organism>
    <name type="scientific">Homo sapiens</name>
    <name type="common">Human</name>
    <dbReference type="NCBI Taxonomy" id="9606"/>
    <lineage>
        <taxon>Eukaryota</taxon>
        <taxon>Metazoa</taxon>
        <taxon>Chordata</taxon>
        <taxon>Craniata</taxon>
        <taxon>Vertebrata</taxon>
        <taxon>Euteleostomi</taxon>
        <taxon>Mammalia</taxon>
        <taxon>Eutheria</taxon>
        <taxon>Euarchontoglires</taxon>
        <taxon>Primates</taxon>
        <taxon>Haplorrhini</taxon>
        <taxon>Catarrhini</taxon>
        <taxon>Hominidae</taxon>
        <taxon>Homo</taxon>
    </lineage>
</organism>
<evidence type="ECO:0000255" key="1">
    <source>
        <dbReference type="PROSITE-ProRule" id="PRU00448"/>
    </source>
</evidence>
<evidence type="ECO:0000269" key="2">
    <source>
    </source>
</evidence>
<evidence type="ECO:0000305" key="3"/>
<reference key="1">
    <citation type="journal article" date="2004" name="Nat. Genet.">
        <title>Complete sequencing and characterization of 21,243 full-length human cDNAs.</title>
        <authorList>
            <person name="Ota T."/>
            <person name="Suzuki Y."/>
            <person name="Nishikawa T."/>
            <person name="Otsuki T."/>
            <person name="Sugiyama T."/>
            <person name="Irie R."/>
            <person name="Wakamatsu A."/>
            <person name="Hayashi K."/>
            <person name="Sato H."/>
            <person name="Nagai K."/>
            <person name="Kimura K."/>
            <person name="Makita H."/>
            <person name="Sekine M."/>
            <person name="Obayashi M."/>
            <person name="Nishi T."/>
            <person name="Shibahara T."/>
            <person name="Tanaka T."/>
            <person name="Ishii S."/>
            <person name="Yamamoto J."/>
            <person name="Saito K."/>
            <person name="Kawai Y."/>
            <person name="Isono Y."/>
            <person name="Nakamura Y."/>
            <person name="Nagahari K."/>
            <person name="Murakami K."/>
            <person name="Yasuda T."/>
            <person name="Iwayanagi T."/>
            <person name="Wagatsuma M."/>
            <person name="Shiratori A."/>
            <person name="Sudo H."/>
            <person name="Hosoiri T."/>
            <person name="Kaku Y."/>
            <person name="Kodaira H."/>
            <person name="Kondo H."/>
            <person name="Sugawara M."/>
            <person name="Takahashi M."/>
            <person name="Kanda K."/>
            <person name="Yokoi T."/>
            <person name="Furuya T."/>
            <person name="Kikkawa E."/>
            <person name="Omura Y."/>
            <person name="Abe K."/>
            <person name="Kamihara K."/>
            <person name="Katsuta N."/>
            <person name="Sato K."/>
            <person name="Tanikawa M."/>
            <person name="Yamazaki M."/>
            <person name="Ninomiya K."/>
            <person name="Ishibashi T."/>
            <person name="Yamashita H."/>
            <person name="Murakawa K."/>
            <person name="Fujimori K."/>
            <person name="Tanai H."/>
            <person name="Kimata M."/>
            <person name="Watanabe M."/>
            <person name="Hiraoka S."/>
            <person name="Chiba Y."/>
            <person name="Ishida S."/>
            <person name="Ono Y."/>
            <person name="Takiguchi S."/>
            <person name="Watanabe S."/>
            <person name="Yosida M."/>
            <person name="Hotuta T."/>
            <person name="Kusano J."/>
            <person name="Kanehori K."/>
            <person name="Takahashi-Fujii A."/>
            <person name="Hara H."/>
            <person name="Tanase T.-O."/>
            <person name="Nomura Y."/>
            <person name="Togiya S."/>
            <person name="Komai F."/>
            <person name="Hara R."/>
            <person name="Takeuchi K."/>
            <person name="Arita M."/>
            <person name="Imose N."/>
            <person name="Musashino K."/>
            <person name="Yuuki H."/>
            <person name="Oshima A."/>
            <person name="Sasaki N."/>
            <person name="Aotsuka S."/>
            <person name="Yoshikawa Y."/>
            <person name="Matsunawa H."/>
            <person name="Ichihara T."/>
            <person name="Shiohata N."/>
            <person name="Sano S."/>
            <person name="Moriya S."/>
            <person name="Momiyama H."/>
            <person name="Satoh N."/>
            <person name="Takami S."/>
            <person name="Terashima Y."/>
            <person name="Suzuki O."/>
            <person name="Nakagawa S."/>
            <person name="Senoh A."/>
            <person name="Mizoguchi H."/>
            <person name="Goto Y."/>
            <person name="Shimizu F."/>
            <person name="Wakebe H."/>
            <person name="Hishigaki H."/>
            <person name="Watanabe T."/>
            <person name="Sugiyama A."/>
            <person name="Takemoto M."/>
            <person name="Kawakami B."/>
            <person name="Yamazaki M."/>
            <person name="Watanabe K."/>
            <person name="Kumagai A."/>
            <person name="Itakura S."/>
            <person name="Fukuzumi Y."/>
            <person name="Fujimori Y."/>
            <person name="Komiyama M."/>
            <person name="Tashiro H."/>
            <person name="Tanigami A."/>
            <person name="Fujiwara T."/>
            <person name="Ono T."/>
            <person name="Yamada K."/>
            <person name="Fujii Y."/>
            <person name="Ozaki K."/>
            <person name="Hirao M."/>
            <person name="Ohmori Y."/>
            <person name="Kawabata A."/>
            <person name="Hikiji T."/>
            <person name="Kobatake N."/>
            <person name="Inagaki H."/>
            <person name="Ikema Y."/>
            <person name="Okamoto S."/>
            <person name="Okitani R."/>
            <person name="Kawakami T."/>
            <person name="Noguchi S."/>
            <person name="Itoh T."/>
            <person name="Shigeta K."/>
            <person name="Senba T."/>
            <person name="Matsumura K."/>
            <person name="Nakajima Y."/>
            <person name="Mizuno T."/>
            <person name="Morinaga M."/>
            <person name="Sasaki M."/>
            <person name="Togashi T."/>
            <person name="Oyama M."/>
            <person name="Hata H."/>
            <person name="Watanabe M."/>
            <person name="Komatsu T."/>
            <person name="Mizushima-Sugano J."/>
            <person name="Satoh T."/>
            <person name="Shirai Y."/>
            <person name="Takahashi Y."/>
            <person name="Nakagawa K."/>
            <person name="Okumura K."/>
            <person name="Nagase T."/>
            <person name="Nomura N."/>
            <person name="Kikuchi H."/>
            <person name="Masuho Y."/>
            <person name="Yamashita R."/>
            <person name="Nakai K."/>
            <person name="Yada T."/>
            <person name="Nakamura Y."/>
            <person name="Ohara O."/>
            <person name="Isogai T."/>
            <person name="Sugano S."/>
        </authorList>
    </citation>
    <scope>NUCLEOTIDE SEQUENCE [LARGE SCALE MRNA]</scope>
    <source>
        <tissue>Colon</tissue>
        <tissue>Testis</tissue>
    </source>
</reference>
<reference key="2">
    <citation type="journal article" date="2001" name="Nature">
        <title>The DNA sequence and comparative analysis of human chromosome 20.</title>
        <authorList>
            <person name="Deloukas P."/>
            <person name="Matthews L.H."/>
            <person name="Ashurst J.L."/>
            <person name="Burton J."/>
            <person name="Gilbert J.G.R."/>
            <person name="Jones M."/>
            <person name="Stavrides G."/>
            <person name="Almeida J.P."/>
            <person name="Babbage A.K."/>
            <person name="Bagguley C.L."/>
            <person name="Bailey J."/>
            <person name="Barlow K.F."/>
            <person name="Bates K.N."/>
            <person name="Beard L.M."/>
            <person name="Beare D.M."/>
            <person name="Beasley O.P."/>
            <person name="Bird C.P."/>
            <person name="Blakey S.E."/>
            <person name="Bridgeman A.M."/>
            <person name="Brown A.J."/>
            <person name="Buck D."/>
            <person name="Burrill W.D."/>
            <person name="Butler A.P."/>
            <person name="Carder C."/>
            <person name="Carter N.P."/>
            <person name="Chapman J.C."/>
            <person name="Clamp M."/>
            <person name="Clark G."/>
            <person name="Clark L.N."/>
            <person name="Clark S.Y."/>
            <person name="Clee C.M."/>
            <person name="Clegg S."/>
            <person name="Cobley V.E."/>
            <person name="Collier R.E."/>
            <person name="Connor R.E."/>
            <person name="Corby N.R."/>
            <person name="Coulson A."/>
            <person name="Coville G.J."/>
            <person name="Deadman R."/>
            <person name="Dhami P.D."/>
            <person name="Dunn M."/>
            <person name="Ellington A.G."/>
            <person name="Frankland J.A."/>
            <person name="Fraser A."/>
            <person name="French L."/>
            <person name="Garner P."/>
            <person name="Grafham D.V."/>
            <person name="Griffiths C."/>
            <person name="Griffiths M.N.D."/>
            <person name="Gwilliam R."/>
            <person name="Hall R.E."/>
            <person name="Hammond S."/>
            <person name="Harley J.L."/>
            <person name="Heath P.D."/>
            <person name="Ho S."/>
            <person name="Holden J.L."/>
            <person name="Howden P.J."/>
            <person name="Huckle E."/>
            <person name="Hunt A.R."/>
            <person name="Hunt S.E."/>
            <person name="Jekosch K."/>
            <person name="Johnson C.M."/>
            <person name="Johnson D."/>
            <person name="Kay M.P."/>
            <person name="Kimberley A.M."/>
            <person name="King A."/>
            <person name="Knights A."/>
            <person name="Laird G.K."/>
            <person name="Lawlor S."/>
            <person name="Lehvaeslaiho M.H."/>
            <person name="Leversha M.A."/>
            <person name="Lloyd C."/>
            <person name="Lloyd D.M."/>
            <person name="Lovell J.D."/>
            <person name="Marsh V.L."/>
            <person name="Martin S.L."/>
            <person name="McConnachie L.J."/>
            <person name="McLay K."/>
            <person name="McMurray A.A."/>
            <person name="Milne S.A."/>
            <person name="Mistry D."/>
            <person name="Moore M.J.F."/>
            <person name="Mullikin J.C."/>
            <person name="Nickerson T."/>
            <person name="Oliver K."/>
            <person name="Parker A."/>
            <person name="Patel R."/>
            <person name="Pearce T.A.V."/>
            <person name="Peck A.I."/>
            <person name="Phillimore B.J.C.T."/>
            <person name="Prathalingam S.R."/>
            <person name="Plumb R.W."/>
            <person name="Ramsay H."/>
            <person name="Rice C.M."/>
            <person name="Ross M.T."/>
            <person name="Scott C.E."/>
            <person name="Sehra H.K."/>
            <person name="Shownkeen R."/>
            <person name="Sims S."/>
            <person name="Skuce C.D."/>
            <person name="Smith M.L."/>
            <person name="Soderlund C."/>
            <person name="Steward C.A."/>
            <person name="Sulston J.E."/>
            <person name="Swann R.M."/>
            <person name="Sycamore N."/>
            <person name="Taylor R."/>
            <person name="Tee L."/>
            <person name="Thomas D.W."/>
            <person name="Thorpe A."/>
            <person name="Tracey A."/>
            <person name="Tromans A.C."/>
            <person name="Vaudin M."/>
            <person name="Wall M."/>
            <person name="Wallis J.M."/>
            <person name="Whitehead S.L."/>
            <person name="Whittaker P."/>
            <person name="Willey D.L."/>
            <person name="Williams L."/>
            <person name="Williams S.A."/>
            <person name="Wilming L."/>
            <person name="Wray P.W."/>
            <person name="Hubbard T."/>
            <person name="Durbin R.M."/>
            <person name="Bentley D.R."/>
            <person name="Beck S."/>
            <person name="Rogers J."/>
        </authorList>
    </citation>
    <scope>NUCLEOTIDE SEQUENCE [LARGE SCALE GENOMIC DNA]</scope>
</reference>
<reference key="3">
    <citation type="submission" date="2005-09" db="EMBL/GenBank/DDBJ databases">
        <authorList>
            <person name="Mural R.J."/>
            <person name="Istrail S."/>
            <person name="Sutton G.G."/>
            <person name="Florea L."/>
            <person name="Halpern A.L."/>
            <person name="Mobarry C.M."/>
            <person name="Lippert R."/>
            <person name="Walenz B."/>
            <person name="Shatkay H."/>
            <person name="Dew I."/>
            <person name="Miller J.R."/>
            <person name="Flanigan M.J."/>
            <person name="Edwards N.J."/>
            <person name="Bolanos R."/>
            <person name="Fasulo D."/>
            <person name="Halldorsson B.V."/>
            <person name="Hannenhalli S."/>
            <person name="Turner R."/>
            <person name="Yooseph S."/>
            <person name="Lu F."/>
            <person name="Nusskern D.R."/>
            <person name="Shue B.C."/>
            <person name="Zheng X.H."/>
            <person name="Zhong F."/>
            <person name="Delcher A.L."/>
            <person name="Huson D.H."/>
            <person name="Kravitz S.A."/>
            <person name="Mouchard L."/>
            <person name="Reinert K."/>
            <person name="Remington K.A."/>
            <person name="Clark A.G."/>
            <person name="Waterman M.S."/>
            <person name="Eichler E.E."/>
            <person name="Adams M.D."/>
            <person name="Hunkapiller M.W."/>
            <person name="Myers E.W."/>
            <person name="Venter J.C."/>
        </authorList>
    </citation>
    <scope>NUCLEOTIDE SEQUENCE [LARGE SCALE GENOMIC DNA]</scope>
</reference>
<reference key="4">
    <citation type="journal article" date="2006" name="Science">
        <title>The consensus coding sequences of human breast and colorectal cancers.</title>
        <authorList>
            <person name="Sjoeblom T."/>
            <person name="Jones S."/>
            <person name="Wood L.D."/>
            <person name="Parsons D.W."/>
            <person name="Lin J."/>
            <person name="Barber T.D."/>
            <person name="Mandelker D."/>
            <person name="Leary R.J."/>
            <person name="Ptak J."/>
            <person name="Silliman N."/>
            <person name="Szabo S."/>
            <person name="Buckhaults P."/>
            <person name="Farrell C."/>
            <person name="Meeh P."/>
            <person name="Markowitz S.D."/>
            <person name="Willis J."/>
            <person name="Dawson D."/>
            <person name="Willson J.K.V."/>
            <person name="Gazdar A.F."/>
            <person name="Hartigan J."/>
            <person name="Wu L."/>
            <person name="Liu C."/>
            <person name="Parmigiani G."/>
            <person name="Park B.H."/>
            <person name="Bachman K.E."/>
            <person name="Papadopoulos N."/>
            <person name="Vogelstein B."/>
            <person name="Kinzler K.W."/>
            <person name="Velculescu V.E."/>
        </authorList>
    </citation>
    <scope>VARIANT [LARGE SCALE ANALYSIS] ASN-694</scope>
</reference>
<keyword id="KW-0040">ANK repeat</keyword>
<keyword id="KW-1267">Proteomics identification</keyword>
<keyword id="KW-1185">Reference proteome</keyword>
<keyword id="KW-0677">Repeat</keyword>
<sequence length="776" mass="86664">MALADKRLENLQIYKVLQCVRNKDKKQIEKLTKLGYPELINYTEPINGLSALHLASVSNDIDMVSFLLDLGAHPDVQDRMGCTPTMRAAELGHELSMEILAKAKADMTIVDNEGKGVLFYCILPTKRHYRCALIALEHGADVNNSTYEGKPIFLRACEDAHDVKDVCLTFLEKGANPNAINSSTGRTALMEASREGVVEIVRGILERGGEVNAFDNDRHHAAHFAAKGGFFDILKLLFAYNGDVGLISINGNTPLHYAAMGGFADCCKYIAQRGCDLKWKNLDHKTPRAVAKEGGFKAASKEIRRAERIANKLARPGAKNPNPLWALRLHDWSVEREAFLREAFAVLDRGDGSISKNDFVMVLEERQDYASSEQLAAIAHLHEKTRGGGVNINEFFKGTRYLNKSFVLGSYGPKKKEKGMGKKGKKGKFVLPLPICVIPEYAFPRRQDGGPPYYMIETYKNVTDSSRFNRDHPPEHPIQDDSVWYIDDSEKVFSNINIITKAGDLASLKKAFESGIPVDMKDNYYKTPLMTACASGNIDVVKFLLEKGANVNATDNFLWTPLHFACHAGQQDIVELLVESGALIDAASINNSTPLNRAIESCRLDTVKYLLDIGAKFQLENRKGHSAMDVAKAYADYRIIDLIKEKLDNLPKPAENQKLKGKTPPILKTEGPEIKKEEELLSSIYGVPTTSEGKKVQKGNVVHLNSLITSGYTKKVDITFIPRRIWSPEATTAELIRKRELRRERFTHEVDFDDFMMPFQKNITEKARALEAALKT</sequence>
<dbReference type="EMBL" id="AK025322">
    <property type="protein sequence ID" value="BAB15111.1"/>
    <property type="status" value="ALT_INIT"/>
    <property type="molecule type" value="mRNA"/>
</dbReference>
<dbReference type="EMBL" id="AK097689">
    <property type="protein sequence ID" value="BAG53512.1"/>
    <property type="molecule type" value="mRNA"/>
</dbReference>
<dbReference type="EMBL" id="AL109754">
    <property type="status" value="NOT_ANNOTATED_CDS"/>
    <property type="molecule type" value="Genomic_DNA"/>
</dbReference>
<dbReference type="EMBL" id="CH471133">
    <property type="protein sequence ID" value="EAX10355.1"/>
    <property type="molecule type" value="Genomic_DNA"/>
</dbReference>
<dbReference type="CCDS" id="CCDS13108.1"/>
<dbReference type="RefSeq" id="NP_001290401.1">
    <property type="nucleotide sequence ID" value="NM_001303472.1"/>
</dbReference>
<dbReference type="RefSeq" id="NP_071379.3">
    <property type="nucleotide sequence ID" value="NM_022096.5"/>
</dbReference>
<dbReference type="RefSeq" id="NP_942093.1">
    <property type="nucleotide sequence ID" value="NM_198798.3"/>
</dbReference>
<dbReference type="SMR" id="Q9NU02"/>
<dbReference type="BioGRID" id="121995">
    <property type="interactions" value="14"/>
</dbReference>
<dbReference type="FunCoup" id="Q9NU02">
    <property type="interactions" value="36"/>
</dbReference>
<dbReference type="IntAct" id="Q9NU02">
    <property type="interactions" value="24"/>
</dbReference>
<dbReference type="MINT" id="Q9NU02"/>
<dbReference type="STRING" id="9606.ENSP00000367644"/>
<dbReference type="GlyGen" id="Q9NU02">
    <property type="glycosylation" value="1 site, 1 O-linked glycan (1 site)"/>
</dbReference>
<dbReference type="iPTMnet" id="Q9NU02"/>
<dbReference type="PhosphoSitePlus" id="Q9NU02"/>
<dbReference type="BioMuta" id="ANKEF1"/>
<dbReference type="DMDM" id="20137528"/>
<dbReference type="jPOST" id="Q9NU02"/>
<dbReference type="MassIVE" id="Q9NU02"/>
<dbReference type="PaxDb" id="9606-ENSP00000367631"/>
<dbReference type="PeptideAtlas" id="Q9NU02"/>
<dbReference type="ProteomicsDB" id="82647"/>
<dbReference type="Antibodypedia" id="35178">
    <property type="antibodies" value="99 antibodies from 15 providers"/>
</dbReference>
<dbReference type="DNASU" id="63926"/>
<dbReference type="Ensembl" id="ENST00000378380.4">
    <property type="protein sequence ID" value="ENSP00000367631.3"/>
    <property type="gene ID" value="ENSG00000132623.16"/>
</dbReference>
<dbReference type="Ensembl" id="ENST00000378392.6">
    <property type="protein sequence ID" value="ENSP00000367644.1"/>
    <property type="gene ID" value="ENSG00000132623.16"/>
</dbReference>
<dbReference type="GeneID" id="63926"/>
<dbReference type="KEGG" id="hsa:63926"/>
<dbReference type="MANE-Select" id="ENST00000378392.6">
    <property type="protein sequence ID" value="ENSP00000367644.1"/>
    <property type="RefSeq nucleotide sequence ID" value="NM_022096.6"/>
    <property type="RefSeq protein sequence ID" value="NP_071379.3"/>
</dbReference>
<dbReference type="UCSC" id="uc002wno.4">
    <property type="organism name" value="human"/>
</dbReference>
<dbReference type="AGR" id="HGNC:15803"/>
<dbReference type="CTD" id="63926"/>
<dbReference type="DisGeNET" id="63926"/>
<dbReference type="GeneCards" id="ANKEF1"/>
<dbReference type="HGNC" id="HGNC:15803">
    <property type="gene designation" value="ANKEF1"/>
</dbReference>
<dbReference type="HPA" id="ENSG00000132623">
    <property type="expression patterns" value="Tissue enhanced (pancreas, testis)"/>
</dbReference>
<dbReference type="neXtProt" id="NX_Q9NU02"/>
<dbReference type="OpenTargets" id="ENSG00000132623"/>
<dbReference type="PharmGKB" id="PA24806"/>
<dbReference type="VEuPathDB" id="HostDB:ENSG00000132623"/>
<dbReference type="eggNOG" id="KOG4177">
    <property type="taxonomic scope" value="Eukaryota"/>
</dbReference>
<dbReference type="GeneTree" id="ENSGT00940000156852"/>
<dbReference type="HOGENOM" id="CLU_020261_0_0_1"/>
<dbReference type="InParanoid" id="Q9NU02"/>
<dbReference type="OMA" id="ATDNFMW"/>
<dbReference type="OrthoDB" id="539213at2759"/>
<dbReference type="PAN-GO" id="Q9NU02">
    <property type="GO annotations" value="0 GO annotations based on evolutionary models"/>
</dbReference>
<dbReference type="PhylomeDB" id="Q9NU02"/>
<dbReference type="TreeFam" id="TF351260"/>
<dbReference type="PathwayCommons" id="Q9NU02"/>
<dbReference type="SignaLink" id="Q9NU02"/>
<dbReference type="BioGRID-ORCS" id="63926">
    <property type="hits" value="12 hits in 1150 CRISPR screens"/>
</dbReference>
<dbReference type="GenomeRNAi" id="63926"/>
<dbReference type="Pharos" id="Q9NU02">
    <property type="development level" value="Tdark"/>
</dbReference>
<dbReference type="PRO" id="PR:Q9NU02"/>
<dbReference type="Proteomes" id="UP000005640">
    <property type="component" value="Chromosome 20"/>
</dbReference>
<dbReference type="RNAct" id="Q9NU02">
    <property type="molecule type" value="protein"/>
</dbReference>
<dbReference type="Bgee" id="ENSG00000132623">
    <property type="expression patterns" value="Expressed in sperm and 157 other cell types or tissues"/>
</dbReference>
<dbReference type="GO" id="GO:0005509">
    <property type="term" value="F:calcium ion binding"/>
    <property type="evidence" value="ECO:0007669"/>
    <property type="project" value="InterPro"/>
</dbReference>
<dbReference type="Gene3D" id="1.25.40.20">
    <property type="entry name" value="Ankyrin repeat-containing domain"/>
    <property type="match status" value="3"/>
</dbReference>
<dbReference type="Gene3D" id="1.10.238.10">
    <property type="entry name" value="EF-hand"/>
    <property type="match status" value="1"/>
</dbReference>
<dbReference type="InterPro" id="IPR052801">
    <property type="entry name" value="Ankyrin-EF-hand"/>
</dbReference>
<dbReference type="InterPro" id="IPR002110">
    <property type="entry name" value="Ankyrin_rpt"/>
</dbReference>
<dbReference type="InterPro" id="IPR036770">
    <property type="entry name" value="Ankyrin_rpt-contain_sf"/>
</dbReference>
<dbReference type="InterPro" id="IPR011992">
    <property type="entry name" value="EF-hand-dom_pair"/>
</dbReference>
<dbReference type="InterPro" id="IPR002048">
    <property type="entry name" value="EF_hand_dom"/>
</dbReference>
<dbReference type="PANTHER" id="PTHR24127">
    <property type="entry name" value="ANKYRIN REPEAT AND EF-HAND DOMAIN-CONTAINING PROTEIN 1"/>
    <property type="match status" value="1"/>
</dbReference>
<dbReference type="PANTHER" id="PTHR24127:SF1">
    <property type="entry name" value="ANKYRIN REPEAT AND EF-HAND DOMAIN-CONTAINING PROTEIN 1"/>
    <property type="match status" value="1"/>
</dbReference>
<dbReference type="Pfam" id="PF12796">
    <property type="entry name" value="Ank_2"/>
    <property type="match status" value="4"/>
</dbReference>
<dbReference type="PRINTS" id="PR01415">
    <property type="entry name" value="ANKYRIN"/>
</dbReference>
<dbReference type="SMART" id="SM00248">
    <property type="entry name" value="ANK"/>
    <property type="match status" value="11"/>
</dbReference>
<dbReference type="SUPFAM" id="SSF48403">
    <property type="entry name" value="Ankyrin repeat"/>
    <property type="match status" value="2"/>
</dbReference>
<dbReference type="SUPFAM" id="SSF47473">
    <property type="entry name" value="EF-hand"/>
    <property type="match status" value="1"/>
</dbReference>
<dbReference type="PROSITE" id="PS50297">
    <property type="entry name" value="ANK_REP_REGION"/>
    <property type="match status" value="1"/>
</dbReference>
<dbReference type="PROSITE" id="PS50088">
    <property type="entry name" value="ANK_REPEAT"/>
    <property type="match status" value="6"/>
</dbReference>
<dbReference type="PROSITE" id="PS50222">
    <property type="entry name" value="EF_HAND_2"/>
    <property type="match status" value="1"/>
</dbReference>
<gene>
    <name type="primary">ANKEF1</name>
    <name type="synonym">ANKRD5</name>
</gene>
<protein>
    <recommendedName>
        <fullName>Ankyrin repeat and EF-hand domain-containing protein 1</fullName>
    </recommendedName>
    <alternativeName>
        <fullName>Ankyrin repeat domain-containing protein 5</fullName>
    </alternativeName>
</protein>
<accession>Q9NU02</accession>
<accession>B3KUQ0</accession>
<accession>Q9H6Y9</accession>
<comment type="interaction">
    <interactant intactId="EBI-8464238">
        <id>Q9NU02</id>
    </interactant>
    <interactant intactId="EBI-718729">
        <id>P55212</id>
        <label>CASP6</label>
    </interactant>
    <organismsDiffer>false</organismsDiffer>
    <experiments>3</experiments>
</comment>
<comment type="interaction">
    <interactant intactId="EBI-8464238">
        <id>Q9NU02</id>
    </interactant>
    <interactant intactId="EBI-6624398">
        <id>P06307</id>
        <label>CCK</label>
    </interactant>
    <organismsDiffer>false</organismsDiffer>
    <experiments>3</experiments>
</comment>
<comment type="interaction">
    <interactant intactId="EBI-8464238">
        <id>Q9NU02</id>
    </interactant>
    <interactant intactId="EBI-751069">
        <id>Q8N2M8</id>
        <label>CLASRP</label>
    </interactant>
    <organismsDiffer>false</organismsDiffer>
    <experiments>3</experiments>
</comment>
<comment type="interaction">
    <interactant intactId="EBI-8464238">
        <id>Q9NU02</id>
    </interactant>
    <interactant intactId="EBI-745535">
        <id>Q8NI60</id>
        <label>COQ8A</label>
    </interactant>
    <organismsDiffer>false</organismsDiffer>
    <experiments>3</experiments>
</comment>
<comment type="interaction">
    <interactant intactId="EBI-8464238">
        <id>Q9NU02</id>
    </interactant>
    <interactant intactId="EBI-21591415">
        <id>P13473-2</id>
        <label>LAMP2</label>
    </interactant>
    <organismsDiffer>false</organismsDiffer>
    <experiments>3</experiments>
</comment>
<comment type="interaction">
    <interactant intactId="EBI-8464238">
        <id>Q9NU02</id>
    </interactant>
    <interactant intactId="EBI-395883">
        <id>P07237</id>
        <label>P4HB</label>
    </interactant>
    <organismsDiffer>false</organismsDiffer>
    <experiments>3</experiments>
</comment>
<comment type="interaction">
    <interactant intactId="EBI-8464238">
        <id>Q9NU02</id>
    </interactant>
    <interactant intactId="EBI-5280197">
        <id>O75400-2</id>
        <label>PRPF40A</label>
    </interactant>
    <organismsDiffer>false</organismsDiffer>
    <experiments>3</experiments>
</comment>
<comment type="interaction">
    <interactant intactId="EBI-8464238">
        <id>Q9NU02</id>
    </interactant>
    <interactant intactId="EBI-2623095">
        <id>Q9Y371</id>
        <label>SH3GLB1</label>
    </interactant>
    <organismsDiffer>false</organismsDiffer>
    <experiments>3</experiments>
</comment>
<comment type="sequence caution" evidence="3">
    <conflict type="erroneous initiation">
        <sequence resource="EMBL-CDS" id="BAB15111"/>
    </conflict>
    <text>Truncated N-terminus.</text>
</comment>
<feature type="chain" id="PRO_0000066899" description="Ankyrin repeat and EF-hand domain-containing protein 1">
    <location>
        <begin position="1"/>
        <end position="776"/>
    </location>
</feature>
<feature type="repeat" description="ANK 1">
    <location>
        <begin position="47"/>
        <end position="76"/>
    </location>
</feature>
<feature type="repeat" description="ANK 2">
    <location>
        <begin position="184"/>
        <end position="213"/>
    </location>
</feature>
<feature type="repeat" description="ANK 3">
    <location>
        <begin position="217"/>
        <end position="246"/>
    </location>
</feature>
<feature type="repeat" description="ANK 4">
    <location>
        <begin position="250"/>
        <end position="279"/>
    </location>
</feature>
<feature type="domain" description="EF-hand" evidence="1">
    <location>
        <begin position="335"/>
        <end position="369"/>
    </location>
</feature>
<feature type="repeat" description="ANK 5">
    <location>
        <begin position="524"/>
        <end position="553"/>
    </location>
</feature>
<feature type="repeat" description="ANK 6">
    <location>
        <begin position="557"/>
        <end position="586"/>
    </location>
</feature>
<feature type="repeat" description="ANK 7">
    <location>
        <begin position="590"/>
        <end position="619"/>
    </location>
</feature>
<feature type="repeat" description="ANK 8">
    <location>
        <begin position="623"/>
        <end position="652"/>
    </location>
</feature>
<feature type="sequence variant" id="VAR_033500" description="In dbSNP:rs7260784.">
    <original>P</original>
    <variation>T</variation>
    <location>
        <position position="74"/>
    </location>
</feature>
<feature type="sequence variant" id="VAR_024172" description="In dbSNP:rs652633.">
    <original>L</original>
    <variation>Q</variation>
    <location>
        <position position="324"/>
    </location>
</feature>
<feature type="sequence variant" id="VAR_033501" description="In dbSNP:rs524625.">
    <original>G</original>
    <variation>E</variation>
    <location>
        <position position="412"/>
    </location>
</feature>
<feature type="sequence variant" id="VAR_035609" description="In a breast cancer sample; somatic mutation." evidence="2">
    <original>K</original>
    <variation>N</variation>
    <location>
        <position position="694"/>
    </location>
</feature>
<feature type="sequence variant" id="VAR_033502" description="In dbSNP:rs6087119.">
    <original>R</original>
    <variation>Q</variation>
    <location>
        <position position="742"/>
    </location>
</feature>
<name>ANKE1_HUMAN</name>
<proteinExistence type="evidence at protein level"/>